<accession>Q2GIK8</accession>
<gene>
    <name evidence="1" type="primary">ispF</name>
    <name type="ordered locus">APH_1276</name>
</gene>
<organism>
    <name type="scientific">Anaplasma phagocytophilum (strain HZ)</name>
    <dbReference type="NCBI Taxonomy" id="212042"/>
    <lineage>
        <taxon>Bacteria</taxon>
        <taxon>Pseudomonadati</taxon>
        <taxon>Pseudomonadota</taxon>
        <taxon>Alphaproteobacteria</taxon>
        <taxon>Rickettsiales</taxon>
        <taxon>Anaplasmataceae</taxon>
        <taxon>Anaplasma</taxon>
        <taxon>phagocytophilum group</taxon>
    </lineage>
</organism>
<comment type="function">
    <text evidence="1">Involved in the biosynthesis of isopentenyl diphosphate (IPP) and dimethylallyl diphosphate (DMAPP), two major building blocks of isoprenoid compounds. Catalyzes the conversion of 4-diphosphocytidyl-2-C-methyl-D-erythritol 2-phosphate (CDP-ME2P) to 2-C-methyl-D-erythritol 2,4-cyclodiphosphate (ME-CPP) with a corresponding release of cytidine 5-monophosphate (CMP).</text>
</comment>
<comment type="catalytic activity">
    <reaction evidence="1">
        <text>4-CDP-2-C-methyl-D-erythritol 2-phosphate = 2-C-methyl-D-erythritol 2,4-cyclic diphosphate + CMP</text>
        <dbReference type="Rhea" id="RHEA:23864"/>
        <dbReference type="ChEBI" id="CHEBI:57919"/>
        <dbReference type="ChEBI" id="CHEBI:58483"/>
        <dbReference type="ChEBI" id="CHEBI:60377"/>
        <dbReference type="EC" id="4.6.1.12"/>
    </reaction>
</comment>
<comment type="cofactor">
    <cofactor evidence="1">
        <name>a divalent metal cation</name>
        <dbReference type="ChEBI" id="CHEBI:60240"/>
    </cofactor>
    <text evidence="1">Binds 1 divalent metal cation per subunit.</text>
</comment>
<comment type="pathway">
    <text evidence="1">Isoprenoid biosynthesis; isopentenyl diphosphate biosynthesis via DXP pathway; isopentenyl diphosphate from 1-deoxy-D-xylulose 5-phosphate: step 4/6.</text>
</comment>
<comment type="subunit">
    <text evidence="1">Homotrimer.</text>
</comment>
<comment type="similarity">
    <text evidence="1">Belongs to the IspF family.</text>
</comment>
<comment type="sequence caution" evidence="2">
    <conflict type="erroneous initiation">
        <sequence resource="EMBL-CDS" id="ABD44458"/>
    </conflict>
    <text>Extended N-terminus.</text>
</comment>
<reference key="1">
    <citation type="journal article" date="2006" name="PLoS Genet.">
        <title>Comparative genomics of emerging human ehrlichiosis agents.</title>
        <authorList>
            <person name="Dunning Hotopp J.C."/>
            <person name="Lin M."/>
            <person name="Madupu R."/>
            <person name="Crabtree J."/>
            <person name="Angiuoli S.V."/>
            <person name="Eisen J.A."/>
            <person name="Seshadri R."/>
            <person name="Ren Q."/>
            <person name="Wu M."/>
            <person name="Utterback T.R."/>
            <person name="Smith S."/>
            <person name="Lewis M."/>
            <person name="Khouri H."/>
            <person name="Zhang C."/>
            <person name="Niu H."/>
            <person name="Lin Q."/>
            <person name="Ohashi N."/>
            <person name="Zhi N."/>
            <person name="Nelson W.C."/>
            <person name="Brinkac L.M."/>
            <person name="Dodson R.J."/>
            <person name="Rosovitz M.J."/>
            <person name="Sundaram J.P."/>
            <person name="Daugherty S.C."/>
            <person name="Davidsen T."/>
            <person name="Durkin A.S."/>
            <person name="Gwinn M.L."/>
            <person name="Haft D.H."/>
            <person name="Selengut J.D."/>
            <person name="Sullivan S.A."/>
            <person name="Zafar N."/>
            <person name="Zhou L."/>
            <person name="Benahmed F."/>
            <person name="Forberger H."/>
            <person name="Halpin R."/>
            <person name="Mulligan S."/>
            <person name="Robinson J."/>
            <person name="White O."/>
            <person name="Rikihisa Y."/>
            <person name="Tettelin H."/>
        </authorList>
    </citation>
    <scope>NUCLEOTIDE SEQUENCE [LARGE SCALE GENOMIC DNA]</scope>
    <source>
        <strain>HZ</strain>
    </source>
</reference>
<feature type="chain" id="PRO_0000237704" description="2-C-methyl-D-erythritol 2,4-cyclodiphosphate synthase">
    <location>
        <begin position="1"/>
        <end position="168"/>
    </location>
</feature>
<feature type="binding site" evidence="1">
    <location>
        <begin position="15"/>
        <end position="17"/>
    </location>
    <ligand>
        <name>4-CDP-2-C-methyl-D-erythritol 2-phosphate</name>
        <dbReference type="ChEBI" id="CHEBI:57919"/>
    </ligand>
</feature>
<feature type="binding site" evidence="1">
    <location>
        <position position="15"/>
    </location>
    <ligand>
        <name>a divalent metal cation</name>
        <dbReference type="ChEBI" id="CHEBI:60240"/>
    </ligand>
</feature>
<feature type="binding site" evidence="1">
    <location>
        <position position="17"/>
    </location>
    <ligand>
        <name>a divalent metal cation</name>
        <dbReference type="ChEBI" id="CHEBI:60240"/>
    </ligand>
</feature>
<feature type="binding site" evidence="1">
    <location>
        <begin position="45"/>
        <end position="46"/>
    </location>
    <ligand>
        <name>4-CDP-2-C-methyl-D-erythritol 2-phosphate</name>
        <dbReference type="ChEBI" id="CHEBI:57919"/>
    </ligand>
</feature>
<feature type="binding site" evidence="1">
    <location>
        <position position="53"/>
    </location>
    <ligand>
        <name>a divalent metal cation</name>
        <dbReference type="ChEBI" id="CHEBI:60240"/>
    </ligand>
</feature>
<feature type="binding site" evidence="1">
    <location>
        <begin position="72"/>
        <end position="76"/>
    </location>
    <ligand>
        <name>4-CDP-2-C-methyl-D-erythritol 2-phosphate</name>
        <dbReference type="ChEBI" id="CHEBI:57919"/>
    </ligand>
</feature>
<feature type="binding site" evidence="1">
    <location>
        <position position="150"/>
    </location>
    <ligand>
        <name>4-CDP-2-C-methyl-D-erythritol 2-phosphate</name>
        <dbReference type="ChEBI" id="CHEBI:57919"/>
    </ligand>
</feature>
<feature type="binding site" evidence="1">
    <location>
        <position position="153"/>
    </location>
    <ligand>
        <name>4-CDP-2-C-methyl-D-erythritol 2-phosphate</name>
        <dbReference type="ChEBI" id="CHEBI:57919"/>
    </ligand>
</feature>
<feature type="site" description="Transition state stabilizer" evidence="1">
    <location>
        <position position="45"/>
    </location>
</feature>
<feature type="site" description="Transition state stabilizer" evidence="1">
    <location>
        <position position="144"/>
    </location>
</feature>
<proteinExistence type="inferred from homology"/>
<keyword id="KW-0414">Isoprene biosynthesis</keyword>
<keyword id="KW-0456">Lyase</keyword>
<keyword id="KW-0479">Metal-binding</keyword>
<sequence length="168" mass="18387">MGYLGMPFRVGMGFDVHRFTESREEGQYIPICGIKVAHTQGIVAHSDGDVALHALTDALLGCMGEGSIGQHFPNSDPQWKNASSSYFLLEAQKKAAAKSYAILNFDVTIVCEQPKIMPHVPKMKEFLSKLLDVDVSQMNIKAVTTEKLGFLGRGEGIAAHAVLMCYRV</sequence>
<evidence type="ECO:0000255" key="1">
    <source>
        <dbReference type="HAMAP-Rule" id="MF_00107"/>
    </source>
</evidence>
<evidence type="ECO:0000305" key="2"/>
<dbReference type="EC" id="4.6.1.12" evidence="1"/>
<dbReference type="EMBL" id="CP000235">
    <property type="protein sequence ID" value="ABD44458.1"/>
    <property type="status" value="ALT_INIT"/>
    <property type="molecule type" value="Genomic_DNA"/>
</dbReference>
<dbReference type="SMR" id="Q2GIK8"/>
<dbReference type="STRING" id="212042.APH_1276"/>
<dbReference type="PaxDb" id="212042-APH_1276"/>
<dbReference type="EnsemblBacteria" id="ABD44458">
    <property type="protein sequence ID" value="ABD44458"/>
    <property type="gene ID" value="APH_1276"/>
</dbReference>
<dbReference type="KEGG" id="aph:APH_1276"/>
<dbReference type="eggNOG" id="COG0245">
    <property type="taxonomic scope" value="Bacteria"/>
</dbReference>
<dbReference type="HOGENOM" id="CLU_084630_2_0_5"/>
<dbReference type="UniPathway" id="UPA00056">
    <property type="reaction ID" value="UER00095"/>
</dbReference>
<dbReference type="Proteomes" id="UP000001943">
    <property type="component" value="Chromosome"/>
</dbReference>
<dbReference type="GO" id="GO:0008685">
    <property type="term" value="F:2-C-methyl-D-erythritol 2,4-cyclodiphosphate synthase activity"/>
    <property type="evidence" value="ECO:0007669"/>
    <property type="project" value="UniProtKB-UniRule"/>
</dbReference>
<dbReference type="GO" id="GO:0046872">
    <property type="term" value="F:metal ion binding"/>
    <property type="evidence" value="ECO:0007669"/>
    <property type="project" value="UniProtKB-KW"/>
</dbReference>
<dbReference type="GO" id="GO:0019288">
    <property type="term" value="P:isopentenyl diphosphate biosynthetic process, methylerythritol 4-phosphate pathway"/>
    <property type="evidence" value="ECO:0007669"/>
    <property type="project" value="UniProtKB-UniRule"/>
</dbReference>
<dbReference type="GO" id="GO:0016114">
    <property type="term" value="P:terpenoid biosynthetic process"/>
    <property type="evidence" value="ECO:0007669"/>
    <property type="project" value="InterPro"/>
</dbReference>
<dbReference type="CDD" id="cd00554">
    <property type="entry name" value="MECDP_synthase"/>
    <property type="match status" value="1"/>
</dbReference>
<dbReference type="Gene3D" id="3.30.1330.50">
    <property type="entry name" value="2-C-methyl-D-erythritol 2,4-cyclodiphosphate synthase"/>
    <property type="match status" value="1"/>
</dbReference>
<dbReference type="HAMAP" id="MF_00107">
    <property type="entry name" value="IspF"/>
    <property type="match status" value="1"/>
</dbReference>
<dbReference type="InterPro" id="IPR003526">
    <property type="entry name" value="MECDP_synthase"/>
</dbReference>
<dbReference type="InterPro" id="IPR020555">
    <property type="entry name" value="MECDP_synthase_CS"/>
</dbReference>
<dbReference type="InterPro" id="IPR036571">
    <property type="entry name" value="MECDP_synthase_sf"/>
</dbReference>
<dbReference type="NCBIfam" id="TIGR00151">
    <property type="entry name" value="ispF"/>
    <property type="match status" value="1"/>
</dbReference>
<dbReference type="PANTHER" id="PTHR43181">
    <property type="entry name" value="2-C-METHYL-D-ERYTHRITOL 2,4-CYCLODIPHOSPHATE SYNTHASE, CHLOROPLASTIC"/>
    <property type="match status" value="1"/>
</dbReference>
<dbReference type="PANTHER" id="PTHR43181:SF1">
    <property type="entry name" value="2-C-METHYL-D-ERYTHRITOL 2,4-CYCLODIPHOSPHATE SYNTHASE, CHLOROPLASTIC"/>
    <property type="match status" value="1"/>
</dbReference>
<dbReference type="Pfam" id="PF02542">
    <property type="entry name" value="YgbB"/>
    <property type="match status" value="1"/>
</dbReference>
<dbReference type="SUPFAM" id="SSF69765">
    <property type="entry name" value="IpsF-like"/>
    <property type="match status" value="1"/>
</dbReference>
<dbReference type="PROSITE" id="PS01350">
    <property type="entry name" value="ISPF"/>
    <property type="match status" value="1"/>
</dbReference>
<protein>
    <recommendedName>
        <fullName evidence="1">2-C-methyl-D-erythritol 2,4-cyclodiphosphate synthase</fullName>
        <shortName evidence="1">MECDP-synthase</shortName>
        <shortName evidence="1">MECPP-synthase</shortName>
        <shortName evidence="1">MECPS</shortName>
        <ecNumber evidence="1">4.6.1.12</ecNumber>
    </recommendedName>
</protein>
<name>ISPF_ANAPZ</name>